<organism>
    <name type="scientific">Tityus obscurus</name>
    <name type="common">Amazonian scorpion</name>
    <name type="synonym">Tityus cambridgei</name>
    <dbReference type="NCBI Taxonomy" id="1221240"/>
    <lineage>
        <taxon>Eukaryota</taxon>
        <taxon>Metazoa</taxon>
        <taxon>Ecdysozoa</taxon>
        <taxon>Arthropoda</taxon>
        <taxon>Chelicerata</taxon>
        <taxon>Arachnida</taxon>
        <taxon>Scorpiones</taxon>
        <taxon>Buthida</taxon>
        <taxon>Buthoidea</taxon>
        <taxon>Buthidae</taxon>
        <taxon>Tityus</taxon>
    </lineage>
</organism>
<dbReference type="GO" id="GO:0005576">
    <property type="term" value="C:extracellular region"/>
    <property type="evidence" value="ECO:0007669"/>
    <property type="project" value="UniProtKB-SubCell"/>
</dbReference>
<dbReference type="GO" id="GO:0031640">
    <property type="term" value="P:killing of cells of another organism"/>
    <property type="evidence" value="ECO:0007669"/>
    <property type="project" value="UniProtKB-KW"/>
</dbReference>
<reference key="1">
    <citation type="journal article" date="2018" name="J. Proteomics">
        <title>Profiling the short, linear, non-disulfide bond-containing peptidome from the venom of the scorpion Tityus obscurus.</title>
        <authorList>
            <person name="Dias N.B."/>
            <person name="de Souza B.M."/>
            <person name="Cocchi F.K."/>
            <person name="Chalkidis H.M."/>
            <person name="Dorce V.A.C."/>
            <person name="Palma M.S."/>
        </authorList>
    </citation>
    <scope>PROTEIN SEQUENCE</scope>
    <scope>IDENTIFICATION BY MASS SPECTROMETRY</scope>
    <scope>MASS SPECTROMETRY</scope>
    <scope>SUBCELLULAR LOCATION</scope>
    <scope>SYNTHESIS</scope>
    <scope>FUNCTION</scope>
    <scope>BIOASSAY</scope>
    <source>
        <tissue>Venom</tissue>
    </source>
</reference>
<proteinExistence type="evidence at protein level"/>
<comment type="function">
    <text evidence="1">Presents moderate hemolytic activity at physiological concentrations (micromolar range), and weak lactate dehydrogenase (LDH) release from mast cells. Does not induce mast cell degranulation, and antimicrobial effects. In vivo, injection into mice causes moderate edema formation, but induces very weak or no change in nociceptive sensibility. It also causes an alteration in rearing (standing on hind limbs), but does not impact locomotion.</text>
</comment>
<comment type="subcellular location">
    <subcellularLocation>
        <location evidence="1">Secreted</location>
    </subcellularLocation>
</comment>
<comment type="tissue specificity">
    <text evidence="3">Expressed by the venom gland.</text>
</comment>
<comment type="mass spectrometry"/>
<keyword id="KW-0204">Cytolysis</keyword>
<keyword id="KW-0903">Direct protein sequencing</keyword>
<keyword id="KW-0964">Secreted</keyword>
<sequence>KIKEKLIEA</sequence>
<accession>P0DRF0</accession>
<name>CRY5_TITOB</name>
<evidence type="ECO:0000269" key="1">
    <source>
    </source>
</evidence>
<evidence type="ECO:0000303" key="2">
    <source>
    </source>
</evidence>
<evidence type="ECO:0000305" key="3">
    <source>
    </source>
</evidence>
<feature type="peptide" id="PRO_0000461740" description="Cryptide Pep-5" evidence="1">
    <location>
        <begin position="1"/>
        <end position="9"/>
    </location>
</feature>
<protein>
    <recommendedName>
        <fullName evidence="2">Cryptide Pep-5</fullName>
    </recommendedName>
</protein>